<evidence type="ECO:0000255" key="1">
    <source>
        <dbReference type="HAMAP-Rule" id="MF_00056"/>
    </source>
</evidence>
<organism>
    <name type="scientific">Xanthomonas campestris pv. campestris (strain 8004)</name>
    <dbReference type="NCBI Taxonomy" id="314565"/>
    <lineage>
        <taxon>Bacteria</taxon>
        <taxon>Pseudomonadati</taxon>
        <taxon>Pseudomonadota</taxon>
        <taxon>Gammaproteobacteria</taxon>
        <taxon>Lysobacterales</taxon>
        <taxon>Lysobacteraceae</taxon>
        <taxon>Xanthomonas</taxon>
    </lineage>
</organism>
<protein>
    <recommendedName>
        <fullName evidence="1">2-dehydro-3-deoxyphosphooctonate aldolase</fullName>
        <ecNumber evidence="1">2.5.1.55</ecNumber>
    </recommendedName>
    <alternativeName>
        <fullName evidence="1">3-deoxy-D-manno-octulosonic acid 8-phosphate synthase</fullName>
    </alternativeName>
    <alternativeName>
        <fullName evidence="1">KDO-8-phosphate synthase</fullName>
        <shortName evidence="1">KDO 8-P synthase</shortName>
        <shortName evidence="1">KDOPS</shortName>
    </alternativeName>
    <alternativeName>
        <fullName evidence="1">Phospho-2-dehydro-3-deoxyoctonate aldolase</fullName>
    </alternativeName>
</protein>
<sequence length="276" mass="29755">MKLCDFEVGLDQPLFLIAGPCVIESMQLQLDVAGKLKEITGKLGINFIFKSSFDKANRTSGTSFRGPGLEEGLKVLDAVKKQIGVPVLTDVHEYTPMNEVAAVVDVLQTPAFLVRQTDFIKNVCAAGKPVNIKKGQFLAPWDMKPVVDKAKSTGNEQIMVCERGASFGYNNLVSDMRSLSVMRDTGCPVVFDATHSVQLPGGQGSSSGGQREFVPVLARAAVAVGISGLFAETHPDPSKALSDGPNAWPLDRMEELLETLMELDAVTKKHGFARFA</sequence>
<proteinExistence type="inferred from homology"/>
<feature type="chain" id="PRO_0000304502" description="2-dehydro-3-deoxyphosphooctonate aldolase">
    <location>
        <begin position="1"/>
        <end position="276"/>
    </location>
</feature>
<name>KDSA_XANC8</name>
<dbReference type="EC" id="2.5.1.55" evidence="1"/>
<dbReference type="EMBL" id="CP000050">
    <property type="protein sequence ID" value="AAY49583.1"/>
    <property type="molecule type" value="Genomic_DNA"/>
</dbReference>
<dbReference type="RefSeq" id="WP_011036875.1">
    <property type="nucleotide sequence ID" value="NZ_CP155948.1"/>
</dbReference>
<dbReference type="SMR" id="Q4UTP0"/>
<dbReference type="GeneID" id="58013749"/>
<dbReference type="KEGG" id="xcb:XC_2533"/>
<dbReference type="HOGENOM" id="CLU_036666_0_0_6"/>
<dbReference type="UniPathway" id="UPA00030"/>
<dbReference type="UniPathway" id="UPA00357">
    <property type="reaction ID" value="UER00474"/>
</dbReference>
<dbReference type="Proteomes" id="UP000000420">
    <property type="component" value="Chromosome"/>
</dbReference>
<dbReference type="GO" id="GO:0005737">
    <property type="term" value="C:cytoplasm"/>
    <property type="evidence" value="ECO:0007669"/>
    <property type="project" value="UniProtKB-SubCell"/>
</dbReference>
<dbReference type="GO" id="GO:0008676">
    <property type="term" value="F:3-deoxy-8-phosphooctulonate synthase activity"/>
    <property type="evidence" value="ECO:0007669"/>
    <property type="project" value="UniProtKB-UniRule"/>
</dbReference>
<dbReference type="GO" id="GO:0019294">
    <property type="term" value="P:keto-3-deoxy-D-manno-octulosonic acid biosynthetic process"/>
    <property type="evidence" value="ECO:0007669"/>
    <property type="project" value="UniProtKB-UniRule"/>
</dbReference>
<dbReference type="Gene3D" id="3.20.20.70">
    <property type="entry name" value="Aldolase class I"/>
    <property type="match status" value="1"/>
</dbReference>
<dbReference type="HAMAP" id="MF_00056">
    <property type="entry name" value="KDO8P_synth"/>
    <property type="match status" value="1"/>
</dbReference>
<dbReference type="InterPro" id="IPR013785">
    <property type="entry name" value="Aldolase_TIM"/>
</dbReference>
<dbReference type="InterPro" id="IPR006218">
    <property type="entry name" value="DAHP1/KDSA"/>
</dbReference>
<dbReference type="InterPro" id="IPR006269">
    <property type="entry name" value="KDO8P_synthase"/>
</dbReference>
<dbReference type="NCBIfam" id="TIGR01362">
    <property type="entry name" value="KDO8P_synth"/>
    <property type="match status" value="1"/>
</dbReference>
<dbReference type="NCBIfam" id="NF003543">
    <property type="entry name" value="PRK05198.1"/>
    <property type="match status" value="1"/>
</dbReference>
<dbReference type="PANTHER" id="PTHR21057">
    <property type="entry name" value="PHOSPHO-2-DEHYDRO-3-DEOXYHEPTONATE ALDOLASE"/>
    <property type="match status" value="1"/>
</dbReference>
<dbReference type="Pfam" id="PF00793">
    <property type="entry name" value="DAHP_synth_1"/>
    <property type="match status" value="1"/>
</dbReference>
<dbReference type="SUPFAM" id="SSF51569">
    <property type="entry name" value="Aldolase"/>
    <property type="match status" value="1"/>
</dbReference>
<comment type="catalytic activity">
    <reaction evidence="1">
        <text>D-arabinose 5-phosphate + phosphoenolpyruvate + H2O = 3-deoxy-alpha-D-manno-2-octulosonate-8-phosphate + phosphate</text>
        <dbReference type="Rhea" id="RHEA:14053"/>
        <dbReference type="ChEBI" id="CHEBI:15377"/>
        <dbReference type="ChEBI" id="CHEBI:43474"/>
        <dbReference type="ChEBI" id="CHEBI:57693"/>
        <dbReference type="ChEBI" id="CHEBI:58702"/>
        <dbReference type="ChEBI" id="CHEBI:85985"/>
        <dbReference type="EC" id="2.5.1.55"/>
    </reaction>
</comment>
<comment type="pathway">
    <text evidence="1">Carbohydrate biosynthesis; 3-deoxy-D-manno-octulosonate biosynthesis; 3-deoxy-D-manno-octulosonate from D-ribulose 5-phosphate: step 2/3.</text>
</comment>
<comment type="pathway">
    <text evidence="1">Bacterial outer membrane biogenesis; lipopolysaccharide biosynthesis.</text>
</comment>
<comment type="subcellular location">
    <subcellularLocation>
        <location evidence="1">Cytoplasm</location>
    </subcellularLocation>
</comment>
<comment type="similarity">
    <text evidence="1">Belongs to the KdsA family.</text>
</comment>
<reference key="1">
    <citation type="journal article" date="2005" name="Genome Res.">
        <title>Comparative and functional genomic analyses of the pathogenicity of phytopathogen Xanthomonas campestris pv. campestris.</title>
        <authorList>
            <person name="Qian W."/>
            <person name="Jia Y."/>
            <person name="Ren S.-X."/>
            <person name="He Y.-Q."/>
            <person name="Feng J.-X."/>
            <person name="Lu L.-F."/>
            <person name="Sun Q."/>
            <person name="Ying G."/>
            <person name="Tang D.-J."/>
            <person name="Tang H."/>
            <person name="Wu W."/>
            <person name="Hao P."/>
            <person name="Wang L."/>
            <person name="Jiang B.-L."/>
            <person name="Zeng S."/>
            <person name="Gu W.-Y."/>
            <person name="Lu G."/>
            <person name="Rong L."/>
            <person name="Tian Y."/>
            <person name="Yao Z."/>
            <person name="Fu G."/>
            <person name="Chen B."/>
            <person name="Fang R."/>
            <person name="Qiang B."/>
            <person name="Chen Z."/>
            <person name="Zhao G.-P."/>
            <person name="Tang J.-L."/>
            <person name="He C."/>
        </authorList>
    </citation>
    <scope>NUCLEOTIDE SEQUENCE [LARGE SCALE GENOMIC DNA]</scope>
    <source>
        <strain>8004</strain>
    </source>
</reference>
<gene>
    <name evidence="1" type="primary">kdsA</name>
    <name type="ordered locus">XC_2533</name>
</gene>
<accession>Q4UTP0</accession>
<keyword id="KW-0963">Cytoplasm</keyword>
<keyword id="KW-0448">Lipopolysaccharide biosynthesis</keyword>
<keyword id="KW-0808">Transferase</keyword>